<reference key="1">
    <citation type="journal article" date="2006" name="PLoS Genet.">
        <title>Comparative genomics of emerging human ehrlichiosis agents.</title>
        <authorList>
            <person name="Dunning Hotopp J.C."/>
            <person name="Lin M."/>
            <person name="Madupu R."/>
            <person name="Crabtree J."/>
            <person name="Angiuoli S.V."/>
            <person name="Eisen J.A."/>
            <person name="Seshadri R."/>
            <person name="Ren Q."/>
            <person name="Wu M."/>
            <person name="Utterback T.R."/>
            <person name="Smith S."/>
            <person name="Lewis M."/>
            <person name="Khouri H."/>
            <person name="Zhang C."/>
            <person name="Niu H."/>
            <person name="Lin Q."/>
            <person name="Ohashi N."/>
            <person name="Zhi N."/>
            <person name="Nelson W.C."/>
            <person name="Brinkac L.M."/>
            <person name="Dodson R.J."/>
            <person name="Rosovitz M.J."/>
            <person name="Sundaram J.P."/>
            <person name="Daugherty S.C."/>
            <person name="Davidsen T."/>
            <person name="Durkin A.S."/>
            <person name="Gwinn M.L."/>
            <person name="Haft D.H."/>
            <person name="Selengut J.D."/>
            <person name="Sullivan S.A."/>
            <person name="Zafar N."/>
            <person name="Zhou L."/>
            <person name="Benahmed F."/>
            <person name="Forberger H."/>
            <person name="Halpin R."/>
            <person name="Mulligan S."/>
            <person name="Robinson J."/>
            <person name="White O."/>
            <person name="Rikihisa Y."/>
            <person name="Tettelin H."/>
        </authorList>
    </citation>
    <scope>NUCLEOTIDE SEQUENCE [LARGE SCALE GENOMIC DNA]</scope>
    <source>
        <strain>HZ</strain>
    </source>
</reference>
<sequence>MNMYRTHLCNALNLSHVGEEVTLSGWIFRKRDHGGILFIDLRDFYGITQLVLNESSDQELFNYARSIGLESVITVKGTVAARSEDTINTSLSTGHVEVAVHTLVTESAADALPIHVPTSTNHPEDLRLKYRFLDLRCDKVKSNMLLRSAVISEMRKAMESRGFIEVQTPILTASSPEGARDYLVPSRVHAGKFYALPQAPQIFKQLLMASGFDKYFQIAPCFRDEDARADRSPGEFYQLDVEMSFVTQEDVFSVMEPVLRDIFTKFAGNRSVSPTFPRITYKDAMLRYGTDKPDLRNPIIIADVSEVFLRSNFKTFQEGVARGMVVRAIPAPKTSEHPRSFFDSKVEYAKKIGARGLGYITFSTDNTVKGPVAKFLSDTELANIQTLAGVGPGDSVFFVSDAADKAAELSGSVRELLGTELNLIEKDTFKFCWIVDFPYFQYENGKLAFSHNPFSMPQGGLDALSSSNPLDIVAYQYDIVCNGIEISSGAIRNHKLDILYKAFSMVGYSPEAVDAEFGALTRAFRFGVPPHGGIAPGVDRIVMLLADVPNIREIIYFPLTQMGEDLLMGAPSEVNQSHLKELSLALNITPKAAGKTSS</sequence>
<protein>
    <recommendedName>
        <fullName evidence="1">Aspartate--tRNA(Asp/Asn) ligase</fullName>
        <ecNumber evidence="1">6.1.1.23</ecNumber>
    </recommendedName>
    <alternativeName>
        <fullName evidence="1">Aspartyl-tRNA synthetase</fullName>
        <shortName evidence="1">AspRS</shortName>
    </alternativeName>
    <alternativeName>
        <fullName evidence="1">Non-discriminating aspartyl-tRNA synthetase</fullName>
        <shortName evidence="1">ND-AspRS</shortName>
    </alternativeName>
</protein>
<accession>Q2GLD8</accession>
<organism>
    <name type="scientific">Anaplasma phagocytophilum (strain HZ)</name>
    <dbReference type="NCBI Taxonomy" id="212042"/>
    <lineage>
        <taxon>Bacteria</taxon>
        <taxon>Pseudomonadati</taxon>
        <taxon>Pseudomonadota</taxon>
        <taxon>Alphaproteobacteria</taxon>
        <taxon>Rickettsiales</taxon>
        <taxon>Anaplasmataceae</taxon>
        <taxon>Anaplasma</taxon>
        <taxon>phagocytophilum group</taxon>
    </lineage>
</organism>
<feature type="chain" id="PRO_1000006632" description="Aspartate--tRNA(Asp/Asn) ligase">
    <location>
        <begin position="1"/>
        <end position="598"/>
    </location>
</feature>
<feature type="region of interest" description="Aspartate" evidence="1">
    <location>
        <begin position="201"/>
        <end position="204"/>
    </location>
</feature>
<feature type="binding site" evidence="1">
    <location>
        <position position="177"/>
    </location>
    <ligand>
        <name>L-aspartate</name>
        <dbReference type="ChEBI" id="CHEBI:29991"/>
    </ligand>
</feature>
<feature type="binding site" evidence="1">
    <location>
        <begin position="223"/>
        <end position="225"/>
    </location>
    <ligand>
        <name>ATP</name>
        <dbReference type="ChEBI" id="CHEBI:30616"/>
    </ligand>
</feature>
<feature type="binding site" evidence="1">
    <location>
        <position position="223"/>
    </location>
    <ligand>
        <name>L-aspartate</name>
        <dbReference type="ChEBI" id="CHEBI:29991"/>
    </ligand>
</feature>
<feature type="binding site" evidence="1">
    <location>
        <position position="451"/>
    </location>
    <ligand>
        <name>L-aspartate</name>
        <dbReference type="ChEBI" id="CHEBI:29991"/>
    </ligand>
</feature>
<feature type="binding site" evidence="1">
    <location>
        <position position="485"/>
    </location>
    <ligand>
        <name>ATP</name>
        <dbReference type="ChEBI" id="CHEBI:30616"/>
    </ligand>
</feature>
<feature type="binding site" evidence="1">
    <location>
        <position position="492"/>
    </location>
    <ligand>
        <name>L-aspartate</name>
        <dbReference type="ChEBI" id="CHEBI:29991"/>
    </ligand>
</feature>
<feature type="binding site" evidence="1">
    <location>
        <begin position="537"/>
        <end position="540"/>
    </location>
    <ligand>
        <name>ATP</name>
        <dbReference type="ChEBI" id="CHEBI:30616"/>
    </ligand>
</feature>
<feature type="site" description="Important for tRNA non-discrimination" evidence="1">
    <location>
        <position position="33"/>
    </location>
</feature>
<name>SYDND_ANAPZ</name>
<proteinExistence type="inferred from homology"/>
<keyword id="KW-0030">Aminoacyl-tRNA synthetase</keyword>
<keyword id="KW-0067">ATP-binding</keyword>
<keyword id="KW-0963">Cytoplasm</keyword>
<keyword id="KW-0436">Ligase</keyword>
<keyword id="KW-0547">Nucleotide-binding</keyword>
<keyword id="KW-0648">Protein biosynthesis</keyword>
<gene>
    <name evidence="1" type="primary">aspS</name>
    <name type="ordered locus">APH_0190</name>
</gene>
<comment type="function">
    <text evidence="1">Aspartyl-tRNA synthetase with relaxed tRNA specificity since it is able to aspartylate not only its cognate tRNA(Asp) but also tRNA(Asn). Reaction proceeds in two steps: L-aspartate is first activated by ATP to form Asp-AMP and then transferred to the acceptor end of tRNA(Asp/Asn).</text>
</comment>
<comment type="catalytic activity">
    <reaction evidence="1">
        <text>tRNA(Asx) + L-aspartate + ATP = L-aspartyl-tRNA(Asx) + AMP + diphosphate</text>
        <dbReference type="Rhea" id="RHEA:18349"/>
        <dbReference type="Rhea" id="RHEA-COMP:9710"/>
        <dbReference type="Rhea" id="RHEA-COMP:9711"/>
        <dbReference type="ChEBI" id="CHEBI:29991"/>
        <dbReference type="ChEBI" id="CHEBI:30616"/>
        <dbReference type="ChEBI" id="CHEBI:33019"/>
        <dbReference type="ChEBI" id="CHEBI:78442"/>
        <dbReference type="ChEBI" id="CHEBI:78516"/>
        <dbReference type="ChEBI" id="CHEBI:456215"/>
        <dbReference type="EC" id="6.1.1.23"/>
    </reaction>
</comment>
<comment type="subunit">
    <text evidence="1">Homodimer.</text>
</comment>
<comment type="subcellular location">
    <subcellularLocation>
        <location evidence="1">Cytoplasm</location>
    </subcellularLocation>
</comment>
<comment type="similarity">
    <text evidence="1">Belongs to the class-II aminoacyl-tRNA synthetase family. Type 1 subfamily.</text>
</comment>
<evidence type="ECO:0000255" key="1">
    <source>
        <dbReference type="HAMAP-Rule" id="MF_00044"/>
    </source>
</evidence>
<dbReference type="EC" id="6.1.1.23" evidence="1"/>
<dbReference type="EMBL" id="CP000235">
    <property type="protein sequence ID" value="ABD43428.1"/>
    <property type="molecule type" value="Genomic_DNA"/>
</dbReference>
<dbReference type="RefSeq" id="WP_011450337.1">
    <property type="nucleotide sequence ID" value="NC_007797.1"/>
</dbReference>
<dbReference type="SMR" id="Q2GLD8"/>
<dbReference type="STRING" id="212042.APH_0190"/>
<dbReference type="PaxDb" id="212042-APH_0190"/>
<dbReference type="EnsemblBacteria" id="ABD43428">
    <property type="protein sequence ID" value="ABD43428"/>
    <property type="gene ID" value="APH_0190"/>
</dbReference>
<dbReference type="KEGG" id="aph:APH_0190"/>
<dbReference type="eggNOG" id="COG0173">
    <property type="taxonomic scope" value="Bacteria"/>
</dbReference>
<dbReference type="HOGENOM" id="CLU_014330_3_2_5"/>
<dbReference type="Proteomes" id="UP000001943">
    <property type="component" value="Chromosome"/>
</dbReference>
<dbReference type="GO" id="GO:0005737">
    <property type="term" value="C:cytoplasm"/>
    <property type="evidence" value="ECO:0007669"/>
    <property type="project" value="UniProtKB-SubCell"/>
</dbReference>
<dbReference type="GO" id="GO:0004815">
    <property type="term" value="F:aspartate-tRNA ligase activity"/>
    <property type="evidence" value="ECO:0007669"/>
    <property type="project" value="UniProtKB-UniRule"/>
</dbReference>
<dbReference type="GO" id="GO:0050560">
    <property type="term" value="F:aspartate-tRNA(Asn) ligase activity"/>
    <property type="evidence" value="ECO:0007669"/>
    <property type="project" value="UniProtKB-EC"/>
</dbReference>
<dbReference type="GO" id="GO:0005524">
    <property type="term" value="F:ATP binding"/>
    <property type="evidence" value="ECO:0007669"/>
    <property type="project" value="UniProtKB-UniRule"/>
</dbReference>
<dbReference type="GO" id="GO:0003676">
    <property type="term" value="F:nucleic acid binding"/>
    <property type="evidence" value="ECO:0007669"/>
    <property type="project" value="InterPro"/>
</dbReference>
<dbReference type="GO" id="GO:0006422">
    <property type="term" value="P:aspartyl-tRNA aminoacylation"/>
    <property type="evidence" value="ECO:0007669"/>
    <property type="project" value="UniProtKB-UniRule"/>
</dbReference>
<dbReference type="CDD" id="cd00777">
    <property type="entry name" value="AspRS_core"/>
    <property type="match status" value="1"/>
</dbReference>
<dbReference type="CDD" id="cd04317">
    <property type="entry name" value="EcAspRS_like_N"/>
    <property type="match status" value="1"/>
</dbReference>
<dbReference type="Gene3D" id="3.30.930.10">
    <property type="entry name" value="Bira Bifunctional Protein, Domain 2"/>
    <property type="match status" value="1"/>
</dbReference>
<dbReference type="Gene3D" id="3.30.1360.30">
    <property type="entry name" value="GAD-like domain"/>
    <property type="match status" value="1"/>
</dbReference>
<dbReference type="Gene3D" id="2.40.50.140">
    <property type="entry name" value="Nucleic acid-binding proteins"/>
    <property type="match status" value="1"/>
</dbReference>
<dbReference type="HAMAP" id="MF_00044">
    <property type="entry name" value="Asp_tRNA_synth_type1"/>
    <property type="match status" value="1"/>
</dbReference>
<dbReference type="InterPro" id="IPR004364">
    <property type="entry name" value="Aa-tRNA-synt_II"/>
</dbReference>
<dbReference type="InterPro" id="IPR006195">
    <property type="entry name" value="aa-tRNA-synth_II"/>
</dbReference>
<dbReference type="InterPro" id="IPR045864">
    <property type="entry name" value="aa-tRNA-synth_II/BPL/LPL"/>
</dbReference>
<dbReference type="InterPro" id="IPR004524">
    <property type="entry name" value="Asp-tRNA-ligase_1"/>
</dbReference>
<dbReference type="InterPro" id="IPR047089">
    <property type="entry name" value="Asp-tRNA-ligase_1_N"/>
</dbReference>
<dbReference type="InterPro" id="IPR002312">
    <property type="entry name" value="Asp/Asn-tRNA-synth_IIb"/>
</dbReference>
<dbReference type="InterPro" id="IPR047090">
    <property type="entry name" value="AspRS_core"/>
</dbReference>
<dbReference type="InterPro" id="IPR004115">
    <property type="entry name" value="GAD-like_sf"/>
</dbReference>
<dbReference type="InterPro" id="IPR029351">
    <property type="entry name" value="GAD_dom"/>
</dbReference>
<dbReference type="InterPro" id="IPR012340">
    <property type="entry name" value="NA-bd_OB-fold"/>
</dbReference>
<dbReference type="InterPro" id="IPR004365">
    <property type="entry name" value="NA-bd_OB_tRNA"/>
</dbReference>
<dbReference type="NCBIfam" id="TIGR00459">
    <property type="entry name" value="aspS_bact"/>
    <property type="match status" value="1"/>
</dbReference>
<dbReference type="NCBIfam" id="NF001750">
    <property type="entry name" value="PRK00476.1"/>
    <property type="match status" value="1"/>
</dbReference>
<dbReference type="PANTHER" id="PTHR22594:SF5">
    <property type="entry name" value="ASPARTATE--TRNA LIGASE, MITOCHONDRIAL"/>
    <property type="match status" value="1"/>
</dbReference>
<dbReference type="PANTHER" id="PTHR22594">
    <property type="entry name" value="ASPARTYL/LYSYL-TRNA SYNTHETASE"/>
    <property type="match status" value="1"/>
</dbReference>
<dbReference type="Pfam" id="PF02938">
    <property type="entry name" value="GAD"/>
    <property type="match status" value="1"/>
</dbReference>
<dbReference type="Pfam" id="PF00152">
    <property type="entry name" value="tRNA-synt_2"/>
    <property type="match status" value="1"/>
</dbReference>
<dbReference type="Pfam" id="PF01336">
    <property type="entry name" value="tRNA_anti-codon"/>
    <property type="match status" value="1"/>
</dbReference>
<dbReference type="PRINTS" id="PR01042">
    <property type="entry name" value="TRNASYNTHASP"/>
</dbReference>
<dbReference type="SUPFAM" id="SSF55681">
    <property type="entry name" value="Class II aaRS and biotin synthetases"/>
    <property type="match status" value="1"/>
</dbReference>
<dbReference type="SUPFAM" id="SSF55261">
    <property type="entry name" value="GAD domain-like"/>
    <property type="match status" value="1"/>
</dbReference>
<dbReference type="SUPFAM" id="SSF50249">
    <property type="entry name" value="Nucleic acid-binding proteins"/>
    <property type="match status" value="1"/>
</dbReference>
<dbReference type="PROSITE" id="PS50862">
    <property type="entry name" value="AA_TRNA_LIGASE_II"/>
    <property type="match status" value="1"/>
</dbReference>